<protein>
    <recommendedName>
        <fullName>Protein phosphatase methylesterase 1</fullName>
        <shortName>PME-1</shortName>
        <ecNumber>3.1.1.89</ecNumber>
    </recommendedName>
</protein>
<comment type="function">
    <text evidence="1">Demethylates proteins that have been reversibly carboxymethylated. Demethylates the phosphatase PP2A catalytic subunit (By similarity).</text>
</comment>
<comment type="catalytic activity">
    <reaction>
        <text>[phosphatase 2A protein]-C-terminal L-leucine methyl ester + H2O = [phosphatase 2A protein]-C-terminal L-leucine + methanol + H(+)</text>
        <dbReference type="Rhea" id="RHEA:48548"/>
        <dbReference type="Rhea" id="RHEA-COMP:12134"/>
        <dbReference type="Rhea" id="RHEA-COMP:12135"/>
        <dbReference type="ChEBI" id="CHEBI:15377"/>
        <dbReference type="ChEBI" id="CHEBI:15378"/>
        <dbReference type="ChEBI" id="CHEBI:17790"/>
        <dbReference type="ChEBI" id="CHEBI:90516"/>
        <dbReference type="ChEBI" id="CHEBI:90517"/>
        <dbReference type="EC" id="3.1.1.89"/>
    </reaction>
</comment>
<comment type="similarity">
    <text evidence="3">Belongs to the AB hydrolase superfamily.</text>
</comment>
<dbReference type="EC" id="3.1.1.89"/>
<dbReference type="EMBL" id="CU329671">
    <property type="protein sequence ID" value="CAB83175.1"/>
    <property type="molecule type" value="Genomic_DNA"/>
</dbReference>
<dbReference type="RefSeq" id="NP_596191.1">
    <property type="nucleotide sequence ID" value="NM_001022110.2"/>
</dbReference>
<dbReference type="SMR" id="Q9P7D2"/>
<dbReference type="BioGRID" id="277882">
    <property type="interactions" value="19"/>
</dbReference>
<dbReference type="FunCoup" id="Q9P7D2">
    <property type="interactions" value="572"/>
</dbReference>
<dbReference type="STRING" id="284812.Q9P7D2"/>
<dbReference type="ESTHER" id="schpo-ppme1">
    <property type="family name" value="PPase_methylesterase_euk"/>
</dbReference>
<dbReference type="PaxDb" id="4896-SPBP4H10.17c.1"/>
<dbReference type="EnsemblFungi" id="SPBP4H10.17c.1">
    <property type="protein sequence ID" value="SPBP4H10.17c.1:pep"/>
    <property type="gene ID" value="SPBP4H10.17c"/>
</dbReference>
<dbReference type="KEGG" id="spo:2541371"/>
<dbReference type="PomBase" id="SPBP4H10.17c"/>
<dbReference type="VEuPathDB" id="FungiDB:SPBP4H10.17c"/>
<dbReference type="eggNOG" id="KOG2564">
    <property type="taxonomic scope" value="Eukaryota"/>
</dbReference>
<dbReference type="HOGENOM" id="CLU_024818_3_0_1"/>
<dbReference type="InParanoid" id="Q9P7D2"/>
<dbReference type="OMA" id="VMVCHHG"/>
<dbReference type="PhylomeDB" id="Q9P7D2"/>
<dbReference type="Reactome" id="R-SPO-69273">
    <property type="pathway name" value="Cyclin A/B1/B2 associated events during G2/M transition"/>
</dbReference>
<dbReference type="PRO" id="PR:Q9P7D2"/>
<dbReference type="Proteomes" id="UP000002485">
    <property type="component" value="Chromosome II"/>
</dbReference>
<dbReference type="GO" id="GO:0005829">
    <property type="term" value="C:cytosol"/>
    <property type="evidence" value="ECO:0007005"/>
    <property type="project" value="PomBase"/>
</dbReference>
<dbReference type="GO" id="GO:0005634">
    <property type="term" value="C:nucleus"/>
    <property type="evidence" value="ECO:0007005"/>
    <property type="project" value="PomBase"/>
</dbReference>
<dbReference type="GO" id="GO:0051722">
    <property type="term" value="F:protein C-terminal methylesterase activity"/>
    <property type="evidence" value="ECO:0000318"/>
    <property type="project" value="GO_Central"/>
</dbReference>
<dbReference type="GO" id="GO:1990748">
    <property type="term" value="P:cellular detoxification"/>
    <property type="evidence" value="ECO:0000305"/>
    <property type="project" value="PomBase"/>
</dbReference>
<dbReference type="GO" id="GO:0030091">
    <property type="term" value="P:protein repair"/>
    <property type="evidence" value="ECO:0000305"/>
    <property type="project" value="PomBase"/>
</dbReference>
<dbReference type="Gene3D" id="3.40.50.1820">
    <property type="entry name" value="alpha/beta hydrolase"/>
    <property type="match status" value="1"/>
</dbReference>
<dbReference type="InterPro" id="IPR000073">
    <property type="entry name" value="AB_hydrolase_1"/>
</dbReference>
<dbReference type="InterPro" id="IPR029058">
    <property type="entry name" value="AB_hydrolase_fold"/>
</dbReference>
<dbReference type="InterPro" id="IPR016812">
    <property type="entry name" value="PPase_methylesterase_euk"/>
</dbReference>
<dbReference type="PANTHER" id="PTHR14189:SF0">
    <property type="entry name" value="PROTEIN PHOSPHATASE METHYLESTERASE 1"/>
    <property type="match status" value="1"/>
</dbReference>
<dbReference type="PANTHER" id="PTHR14189">
    <property type="entry name" value="PROTEIN PHOSPHATASE METHYLESTERASE-1 RELATED"/>
    <property type="match status" value="1"/>
</dbReference>
<dbReference type="Pfam" id="PF12697">
    <property type="entry name" value="Abhydrolase_6"/>
    <property type="match status" value="1"/>
</dbReference>
<dbReference type="PIRSF" id="PIRSF022950">
    <property type="entry name" value="PPase_methylesterase_euk"/>
    <property type="match status" value="1"/>
</dbReference>
<dbReference type="SUPFAM" id="SSF53474">
    <property type="entry name" value="alpha/beta-Hydrolases"/>
    <property type="match status" value="1"/>
</dbReference>
<reference key="1">
    <citation type="journal article" date="2002" name="Nature">
        <title>The genome sequence of Schizosaccharomyces pombe.</title>
        <authorList>
            <person name="Wood V."/>
            <person name="Gwilliam R."/>
            <person name="Rajandream M.A."/>
            <person name="Lyne M.H."/>
            <person name="Lyne R."/>
            <person name="Stewart A."/>
            <person name="Sgouros J.G."/>
            <person name="Peat N."/>
            <person name="Hayles J."/>
            <person name="Baker S.G."/>
            <person name="Basham D."/>
            <person name="Bowman S."/>
            <person name="Brooks K."/>
            <person name="Brown D."/>
            <person name="Brown S."/>
            <person name="Chillingworth T."/>
            <person name="Churcher C.M."/>
            <person name="Collins M."/>
            <person name="Connor R."/>
            <person name="Cronin A."/>
            <person name="Davis P."/>
            <person name="Feltwell T."/>
            <person name="Fraser A."/>
            <person name="Gentles S."/>
            <person name="Goble A."/>
            <person name="Hamlin N."/>
            <person name="Harris D.E."/>
            <person name="Hidalgo J."/>
            <person name="Hodgson G."/>
            <person name="Holroyd S."/>
            <person name="Hornsby T."/>
            <person name="Howarth S."/>
            <person name="Huckle E.J."/>
            <person name="Hunt S."/>
            <person name="Jagels K."/>
            <person name="James K.D."/>
            <person name="Jones L."/>
            <person name="Jones M."/>
            <person name="Leather S."/>
            <person name="McDonald S."/>
            <person name="McLean J."/>
            <person name="Mooney P."/>
            <person name="Moule S."/>
            <person name="Mungall K.L."/>
            <person name="Murphy L.D."/>
            <person name="Niblett D."/>
            <person name="Odell C."/>
            <person name="Oliver K."/>
            <person name="O'Neil S."/>
            <person name="Pearson D."/>
            <person name="Quail M.A."/>
            <person name="Rabbinowitsch E."/>
            <person name="Rutherford K.M."/>
            <person name="Rutter S."/>
            <person name="Saunders D."/>
            <person name="Seeger K."/>
            <person name="Sharp S."/>
            <person name="Skelton J."/>
            <person name="Simmonds M.N."/>
            <person name="Squares R."/>
            <person name="Squares S."/>
            <person name="Stevens K."/>
            <person name="Taylor K."/>
            <person name="Taylor R.G."/>
            <person name="Tivey A."/>
            <person name="Walsh S.V."/>
            <person name="Warren T."/>
            <person name="Whitehead S."/>
            <person name="Woodward J.R."/>
            <person name="Volckaert G."/>
            <person name="Aert R."/>
            <person name="Robben J."/>
            <person name="Grymonprez B."/>
            <person name="Weltjens I."/>
            <person name="Vanstreels E."/>
            <person name="Rieger M."/>
            <person name="Schaefer M."/>
            <person name="Mueller-Auer S."/>
            <person name="Gabel C."/>
            <person name="Fuchs M."/>
            <person name="Duesterhoeft A."/>
            <person name="Fritzc C."/>
            <person name="Holzer E."/>
            <person name="Moestl D."/>
            <person name="Hilbert H."/>
            <person name="Borzym K."/>
            <person name="Langer I."/>
            <person name="Beck A."/>
            <person name="Lehrach H."/>
            <person name="Reinhardt R."/>
            <person name="Pohl T.M."/>
            <person name="Eger P."/>
            <person name="Zimmermann W."/>
            <person name="Wedler H."/>
            <person name="Wambutt R."/>
            <person name="Purnelle B."/>
            <person name="Goffeau A."/>
            <person name="Cadieu E."/>
            <person name="Dreano S."/>
            <person name="Gloux S."/>
            <person name="Lelaure V."/>
            <person name="Mottier S."/>
            <person name="Galibert F."/>
            <person name="Aves S.J."/>
            <person name="Xiang Z."/>
            <person name="Hunt C."/>
            <person name="Moore K."/>
            <person name="Hurst S.M."/>
            <person name="Lucas M."/>
            <person name="Rochet M."/>
            <person name="Gaillardin C."/>
            <person name="Tallada V.A."/>
            <person name="Garzon A."/>
            <person name="Thode G."/>
            <person name="Daga R.R."/>
            <person name="Cruzado L."/>
            <person name="Jimenez J."/>
            <person name="Sanchez M."/>
            <person name="del Rey F."/>
            <person name="Benito J."/>
            <person name="Dominguez A."/>
            <person name="Revuelta J.L."/>
            <person name="Moreno S."/>
            <person name="Armstrong J."/>
            <person name="Forsburg S.L."/>
            <person name="Cerutti L."/>
            <person name="Lowe T."/>
            <person name="McCombie W.R."/>
            <person name="Paulsen I."/>
            <person name="Potashkin J."/>
            <person name="Shpakovski G.V."/>
            <person name="Ussery D."/>
            <person name="Barrell B.G."/>
            <person name="Nurse P."/>
        </authorList>
    </citation>
    <scope>NUCLEOTIDE SEQUENCE [LARGE SCALE GENOMIC DNA]</scope>
    <source>
        <strain>972 / ATCC 24843</strain>
    </source>
</reference>
<evidence type="ECO:0000250" key="1"/>
<evidence type="ECO:0000256" key="2">
    <source>
        <dbReference type="SAM" id="MobiDB-lite"/>
    </source>
</evidence>
<evidence type="ECO:0000305" key="3"/>
<feature type="chain" id="PRO_0000223669" description="Protein phosphatase methylesterase 1">
    <location>
        <begin position="1"/>
        <end position="341"/>
    </location>
</feature>
<feature type="region of interest" description="Disordered" evidence="2">
    <location>
        <begin position="1"/>
        <end position="24"/>
    </location>
</feature>
<feature type="compositionally biased region" description="Polar residues" evidence="2">
    <location>
        <begin position="9"/>
        <end position="20"/>
    </location>
</feature>
<feature type="active site" evidence="1">
    <location>
        <position position="153"/>
    </location>
</feature>
<feature type="active site" evidence="1">
    <location>
        <position position="178"/>
    </location>
</feature>
<feature type="active site" evidence="1">
    <location>
        <position position="304"/>
    </location>
</feature>
<name>PPME1_SCHPO</name>
<gene>
    <name type="primary">ppe1</name>
    <name type="ORF">SPBP4H10.17c</name>
</gene>
<accession>Q9P7D2</accession>
<keyword id="KW-0378">Hydrolase</keyword>
<keyword id="KW-1185">Reference proteome</keyword>
<keyword id="KW-0719">Serine esterase</keyword>
<sequence length="341" mass="38092">MAFRKEELSQTLYENESEQSSETKELMLNNEESLSDWRNYFDEKLTIPGESGALNGTINGYLTLPQPDGCLLVLQHGAGSSAMSFAPVTQELLSNSDNKVGFLALDLRAHGETTLEPESDMSLETLSKDFTHAVSYVQRMFELDEKIILVGHSLGGAICAYCAFQKTIPNTSGLVVIDVVEGTAMEALGFMKTYLSNRPTSFKSIDDAISWHIKTLVTRNRLSACITVPSLLVQQEDGTFVWRTDLYKTSPYWMDWFKGLSDKFLRAPYGRMLIVAGTDRLDKTLTIGQMQGKYQLEILPETGHFVHEDVPAKISSLLLNFWHRNQPLVLPPKVGATPVLQ</sequence>
<organism>
    <name type="scientific">Schizosaccharomyces pombe (strain 972 / ATCC 24843)</name>
    <name type="common">Fission yeast</name>
    <dbReference type="NCBI Taxonomy" id="284812"/>
    <lineage>
        <taxon>Eukaryota</taxon>
        <taxon>Fungi</taxon>
        <taxon>Dikarya</taxon>
        <taxon>Ascomycota</taxon>
        <taxon>Taphrinomycotina</taxon>
        <taxon>Schizosaccharomycetes</taxon>
        <taxon>Schizosaccharomycetales</taxon>
        <taxon>Schizosaccharomycetaceae</taxon>
        <taxon>Schizosaccharomyces</taxon>
    </lineage>
</organism>
<proteinExistence type="inferred from homology"/>